<reference key="1">
    <citation type="submission" date="2006-12" db="EMBL/GenBank/DDBJ databases">
        <title>Complete sequence of Shewanella amazonensis SB2B.</title>
        <authorList>
            <consortium name="US DOE Joint Genome Institute"/>
            <person name="Copeland A."/>
            <person name="Lucas S."/>
            <person name="Lapidus A."/>
            <person name="Barry K."/>
            <person name="Detter J.C."/>
            <person name="Glavina del Rio T."/>
            <person name="Hammon N."/>
            <person name="Israni S."/>
            <person name="Dalin E."/>
            <person name="Tice H."/>
            <person name="Pitluck S."/>
            <person name="Munk A.C."/>
            <person name="Brettin T."/>
            <person name="Bruce D."/>
            <person name="Han C."/>
            <person name="Tapia R."/>
            <person name="Gilna P."/>
            <person name="Schmutz J."/>
            <person name="Larimer F."/>
            <person name="Land M."/>
            <person name="Hauser L."/>
            <person name="Kyrpides N."/>
            <person name="Mikhailova N."/>
            <person name="Fredrickson J."/>
            <person name="Richardson P."/>
        </authorList>
    </citation>
    <scope>NUCLEOTIDE SEQUENCE [LARGE SCALE GENOMIC DNA]</scope>
    <source>
        <strain>ATCC BAA-1098 / SB2B</strain>
    </source>
</reference>
<comment type="function">
    <text evidence="1">Transfers the gamma-phosphate of ATP to the 4'-position of a tetraacyldisaccharide 1-phosphate intermediate (termed DS-1-P) to form tetraacyldisaccharide 1,4'-bis-phosphate (lipid IVA).</text>
</comment>
<comment type="catalytic activity">
    <reaction evidence="1">
        <text>a lipid A disaccharide + ATP = a lipid IVA + ADP + H(+)</text>
        <dbReference type="Rhea" id="RHEA:67840"/>
        <dbReference type="ChEBI" id="CHEBI:15378"/>
        <dbReference type="ChEBI" id="CHEBI:30616"/>
        <dbReference type="ChEBI" id="CHEBI:176343"/>
        <dbReference type="ChEBI" id="CHEBI:176425"/>
        <dbReference type="ChEBI" id="CHEBI:456216"/>
        <dbReference type="EC" id="2.7.1.130"/>
    </reaction>
</comment>
<comment type="pathway">
    <text evidence="1">Glycolipid biosynthesis; lipid IV(A) biosynthesis; lipid IV(A) from (3R)-3-hydroxytetradecanoyl-[acyl-carrier-protein] and UDP-N-acetyl-alpha-D-glucosamine: step 6/6.</text>
</comment>
<comment type="similarity">
    <text evidence="1">Belongs to the LpxK family.</text>
</comment>
<dbReference type="EC" id="2.7.1.130" evidence="1"/>
<dbReference type="EMBL" id="CP000507">
    <property type="protein sequence ID" value="ABL99545.1"/>
    <property type="molecule type" value="Genomic_DNA"/>
</dbReference>
<dbReference type="RefSeq" id="WP_011759453.1">
    <property type="nucleotide sequence ID" value="NC_008700.1"/>
</dbReference>
<dbReference type="SMR" id="A1S589"/>
<dbReference type="STRING" id="326297.Sama_1338"/>
<dbReference type="KEGG" id="saz:Sama_1338"/>
<dbReference type="eggNOG" id="COG1663">
    <property type="taxonomic scope" value="Bacteria"/>
</dbReference>
<dbReference type="HOGENOM" id="CLU_038816_2_0_6"/>
<dbReference type="OrthoDB" id="9766423at2"/>
<dbReference type="UniPathway" id="UPA00359">
    <property type="reaction ID" value="UER00482"/>
</dbReference>
<dbReference type="Proteomes" id="UP000009175">
    <property type="component" value="Chromosome"/>
</dbReference>
<dbReference type="GO" id="GO:0005886">
    <property type="term" value="C:plasma membrane"/>
    <property type="evidence" value="ECO:0007669"/>
    <property type="project" value="TreeGrafter"/>
</dbReference>
<dbReference type="GO" id="GO:0005524">
    <property type="term" value="F:ATP binding"/>
    <property type="evidence" value="ECO:0007669"/>
    <property type="project" value="UniProtKB-UniRule"/>
</dbReference>
<dbReference type="GO" id="GO:0009029">
    <property type="term" value="F:tetraacyldisaccharide 4'-kinase activity"/>
    <property type="evidence" value="ECO:0007669"/>
    <property type="project" value="UniProtKB-UniRule"/>
</dbReference>
<dbReference type="GO" id="GO:0009245">
    <property type="term" value="P:lipid A biosynthetic process"/>
    <property type="evidence" value="ECO:0007669"/>
    <property type="project" value="UniProtKB-UniRule"/>
</dbReference>
<dbReference type="GO" id="GO:0009244">
    <property type="term" value="P:lipopolysaccharide core region biosynthetic process"/>
    <property type="evidence" value="ECO:0007669"/>
    <property type="project" value="TreeGrafter"/>
</dbReference>
<dbReference type="HAMAP" id="MF_00409">
    <property type="entry name" value="LpxK"/>
    <property type="match status" value="1"/>
</dbReference>
<dbReference type="InterPro" id="IPR003758">
    <property type="entry name" value="LpxK"/>
</dbReference>
<dbReference type="InterPro" id="IPR027417">
    <property type="entry name" value="P-loop_NTPase"/>
</dbReference>
<dbReference type="NCBIfam" id="TIGR00682">
    <property type="entry name" value="lpxK"/>
    <property type="match status" value="1"/>
</dbReference>
<dbReference type="PANTHER" id="PTHR42724">
    <property type="entry name" value="TETRAACYLDISACCHARIDE 4'-KINASE"/>
    <property type="match status" value="1"/>
</dbReference>
<dbReference type="PANTHER" id="PTHR42724:SF1">
    <property type="entry name" value="TETRAACYLDISACCHARIDE 4'-KINASE, MITOCHONDRIAL-RELATED"/>
    <property type="match status" value="1"/>
</dbReference>
<dbReference type="Pfam" id="PF02606">
    <property type="entry name" value="LpxK"/>
    <property type="match status" value="1"/>
</dbReference>
<dbReference type="SUPFAM" id="SSF52540">
    <property type="entry name" value="P-loop containing nucleoside triphosphate hydrolases"/>
    <property type="match status" value="1"/>
</dbReference>
<gene>
    <name evidence="1" type="primary">lpxK</name>
    <name type="ordered locus">Sama_1338</name>
</gene>
<feature type="chain" id="PRO_0000291241" description="Tetraacyldisaccharide 4'-kinase">
    <location>
        <begin position="1"/>
        <end position="349"/>
    </location>
</feature>
<feature type="binding site" evidence="1">
    <location>
        <begin position="58"/>
        <end position="65"/>
    </location>
    <ligand>
        <name>ATP</name>
        <dbReference type="ChEBI" id="CHEBI:30616"/>
    </ligand>
</feature>
<keyword id="KW-0067">ATP-binding</keyword>
<keyword id="KW-0418">Kinase</keyword>
<keyword id="KW-0441">Lipid A biosynthesis</keyword>
<keyword id="KW-0444">Lipid biosynthesis</keyword>
<keyword id="KW-0443">Lipid metabolism</keyword>
<keyword id="KW-0547">Nucleotide-binding</keyword>
<keyword id="KW-1185">Reference proteome</keyword>
<keyword id="KW-0808">Transferase</keyword>
<sequence length="349" mass="38227">MQSFVHKIWYQGHPAAWLLLPLSLLFWLVSSLRRAAFRLGLKRSERLPVPVVVVGNITAGGSGKTPTVLYLIELLRREGWRPGVISRGYGASFDGELDVVAGMSPAQVGDEPAMIAMRTGIPMVVGRNRIKAAHKLLQCHDVNVILCDDGLQHYALERDVEILVIDGERRFGNGWLLPAGPLREGAWRKNSVNFVLCNGASAEADEYAMTLEPTGLVAVAAIHGKSQAKDNSHNAQDNATPRPGDTVNAMAGIGNPQRFFSTLMAQGFVLEKAHEFADHMAFSETDIATIDDGRPLLMTEKDAVKCREFAKQHWWYLAVDANLPPTFSTRLLDALNRAATAKQGNTHGL</sequence>
<name>LPXK_SHEAM</name>
<protein>
    <recommendedName>
        <fullName evidence="1">Tetraacyldisaccharide 4'-kinase</fullName>
        <ecNumber evidence="1">2.7.1.130</ecNumber>
    </recommendedName>
    <alternativeName>
        <fullName evidence="1">Lipid A 4'-kinase</fullName>
    </alternativeName>
</protein>
<organism>
    <name type="scientific">Shewanella amazonensis (strain ATCC BAA-1098 / SB2B)</name>
    <dbReference type="NCBI Taxonomy" id="326297"/>
    <lineage>
        <taxon>Bacteria</taxon>
        <taxon>Pseudomonadati</taxon>
        <taxon>Pseudomonadota</taxon>
        <taxon>Gammaproteobacteria</taxon>
        <taxon>Alteromonadales</taxon>
        <taxon>Shewanellaceae</taxon>
        <taxon>Shewanella</taxon>
    </lineage>
</organism>
<evidence type="ECO:0000255" key="1">
    <source>
        <dbReference type="HAMAP-Rule" id="MF_00409"/>
    </source>
</evidence>
<accession>A1S589</accession>
<proteinExistence type="inferred from homology"/>